<name>SDHE_COLP3</name>
<evidence type="ECO:0000250" key="1">
    <source>
        <dbReference type="UniProtKB" id="G4V4G2"/>
    </source>
</evidence>
<evidence type="ECO:0000305" key="2"/>
<gene>
    <name type="primary">sdhE</name>
    <name type="ordered locus">CPS_4131</name>
</gene>
<reference key="1">
    <citation type="journal article" date="2005" name="Proc. Natl. Acad. Sci. U.S.A.">
        <title>The psychrophilic lifestyle as revealed by the genome sequence of Colwellia psychrerythraea 34H through genomic and proteomic analyses.</title>
        <authorList>
            <person name="Methe B.A."/>
            <person name="Nelson K.E."/>
            <person name="Deming J.W."/>
            <person name="Momen B."/>
            <person name="Melamud E."/>
            <person name="Zhang X."/>
            <person name="Moult J."/>
            <person name="Madupu R."/>
            <person name="Nelson W.C."/>
            <person name="Dodson R.J."/>
            <person name="Brinkac L.M."/>
            <person name="Daugherty S.C."/>
            <person name="Durkin A.S."/>
            <person name="DeBoy R.T."/>
            <person name="Kolonay J.F."/>
            <person name="Sullivan S.A."/>
            <person name="Zhou L."/>
            <person name="Davidsen T.M."/>
            <person name="Wu M."/>
            <person name="Huston A.L."/>
            <person name="Lewis M."/>
            <person name="Weaver B."/>
            <person name="Weidman J.F."/>
            <person name="Khouri H."/>
            <person name="Utterback T.R."/>
            <person name="Feldblyum T.V."/>
            <person name="Fraser C.M."/>
        </authorList>
    </citation>
    <scope>NUCLEOTIDE SEQUENCE [LARGE SCALE GENOMIC DNA]</scope>
    <source>
        <strain>34H / ATCC BAA-681</strain>
    </source>
</reference>
<proteinExistence type="inferred from homology"/>
<keyword id="KW-0143">Chaperone</keyword>
<keyword id="KW-0963">Cytoplasm</keyword>
<dbReference type="EMBL" id="CP000083">
    <property type="protein sequence ID" value="AAZ27617.1"/>
    <property type="molecule type" value="Genomic_DNA"/>
</dbReference>
<dbReference type="SMR" id="Q47WN6"/>
<dbReference type="STRING" id="167879.CPS_4131"/>
<dbReference type="KEGG" id="cps:CPS_4131"/>
<dbReference type="eggNOG" id="COG2938">
    <property type="taxonomic scope" value="Bacteria"/>
</dbReference>
<dbReference type="HOGENOM" id="CLU_103054_2_2_6"/>
<dbReference type="Proteomes" id="UP000000547">
    <property type="component" value="Chromosome"/>
</dbReference>
<dbReference type="GO" id="GO:0005737">
    <property type="term" value="C:cytoplasm"/>
    <property type="evidence" value="ECO:0007669"/>
    <property type="project" value="UniProtKB-SubCell"/>
</dbReference>
<dbReference type="GO" id="GO:0006105">
    <property type="term" value="P:succinate metabolic process"/>
    <property type="evidence" value="ECO:0007669"/>
    <property type="project" value="TreeGrafter"/>
</dbReference>
<dbReference type="Gene3D" id="1.10.150.250">
    <property type="entry name" value="Flavinator of succinate dehydrogenase"/>
    <property type="match status" value="1"/>
</dbReference>
<dbReference type="InterPro" id="IPR005631">
    <property type="entry name" value="SDH"/>
</dbReference>
<dbReference type="InterPro" id="IPR036714">
    <property type="entry name" value="SDH_sf"/>
</dbReference>
<dbReference type="InterPro" id="IPR050531">
    <property type="entry name" value="SdhE_FAD_assembly_factor"/>
</dbReference>
<dbReference type="PANTHER" id="PTHR39585">
    <property type="entry name" value="FAD ASSEMBLY FACTOR SDHE"/>
    <property type="match status" value="1"/>
</dbReference>
<dbReference type="PANTHER" id="PTHR39585:SF1">
    <property type="entry name" value="FAD ASSEMBLY FACTOR SDHE"/>
    <property type="match status" value="1"/>
</dbReference>
<dbReference type="Pfam" id="PF03937">
    <property type="entry name" value="Sdh5"/>
    <property type="match status" value="1"/>
</dbReference>
<dbReference type="SUPFAM" id="SSF109910">
    <property type="entry name" value="YgfY-like"/>
    <property type="match status" value="1"/>
</dbReference>
<comment type="function">
    <text evidence="1">An FAD assembly protein, which accelerates covalent attachment of the cofactor into other proteins. Plays an essential role in the assembly of succinate dehydrogenase (SDH, respiratory complex II), an enzyme complex that is a component of both the tricarboxylic acid cycle and the electron transport chain, and which couples the oxidation of succinate to fumarate with the reduction of ubiquinone (coenzyme Q) to ubiquinol. Required for flavinylation (covalent attachment of FAD) of the flavoprotein subunit SdhA of SDH and other flavinylated proteins as well.</text>
</comment>
<comment type="subcellular location">
    <subcellularLocation>
        <location evidence="1">Cytoplasm</location>
    </subcellularLocation>
</comment>
<comment type="similarity">
    <text evidence="2">Belongs to the SdhE FAD assembly factor family.</text>
</comment>
<organism>
    <name type="scientific">Colwellia psychrerythraea (strain 34H / ATCC BAA-681)</name>
    <name type="common">Vibrio psychroerythus</name>
    <dbReference type="NCBI Taxonomy" id="167879"/>
    <lineage>
        <taxon>Bacteria</taxon>
        <taxon>Pseudomonadati</taxon>
        <taxon>Pseudomonadota</taxon>
        <taxon>Gammaproteobacteria</taxon>
        <taxon>Alteromonadales</taxon>
        <taxon>Colwelliaceae</taxon>
        <taxon>Colwellia</taxon>
    </lineage>
</organism>
<sequence length="91" mass="10669">MTNNENSTNLLKVNKARLKWACRRGMLELDVLFIPFVDEAYDELSTKDQFTFERLLTGQDPELFAWFMGHEVCEDTELNAMVQLILKRVKV</sequence>
<protein>
    <recommendedName>
        <fullName>FAD assembly factor SdhE</fullName>
    </recommendedName>
</protein>
<feature type="chain" id="PRO_0000214392" description="FAD assembly factor SdhE">
    <location>
        <begin position="1"/>
        <end position="91"/>
    </location>
</feature>
<accession>Q47WN6</accession>